<keyword id="KW-0963">Cytoplasm</keyword>
<keyword id="KW-0342">GTP-binding</keyword>
<keyword id="KW-0460">Magnesium</keyword>
<keyword id="KW-0479">Metal-binding</keyword>
<keyword id="KW-0501">Molybdenum cofactor biosynthesis</keyword>
<keyword id="KW-0547">Nucleotide-binding</keyword>
<keyword id="KW-0808">Transferase</keyword>
<dbReference type="EC" id="2.7.7.77" evidence="1"/>
<dbReference type="EMBL" id="CP000438">
    <property type="protein sequence ID" value="ABJ12267.1"/>
    <property type="molecule type" value="Genomic_DNA"/>
</dbReference>
<dbReference type="RefSeq" id="WP_003109495.1">
    <property type="nucleotide sequence ID" value="NZ_CP034244.1"/>
</dbReference>
<dbReference type="SMR" id="Q02PJ4"/>
<dbReference type="KEGG" id="pau:PA14_24890"/>
<dbReference type="PseudoCAP" id="PA14_24890"/>
<dbReference type="HOGENOM" id="CLU_055597_5_1_6"/>
<dbReference type="BioCyc" id="PAER208963:G1G74-2076-MONOMER"/>
<dbReference type="Proteomes" id="UP000000653">
    <property type="component" value="Chromosome"/>
</dbReference>
<dbReference type="GO" id="GO:0005737">
    <property type="term" value="C:cytoplasm"/>
    <property type="evidence" value="ECO:0007669"/>
    <property type="project" value="UniProtKB-SubCell"/>
</dbReference>
<dbReference type="GO" id="GO:0005525">
    <property type="term" value="F:GTP binding"/>
    <property type="evidence" value="ECO:0007669"/>
    <property type="project" value="UniProtKB-UniRule"/>
</dbReference>
<dbReference type="GO" id="GO:0046872">
    <property type="term" value="F:metal ion binding"/>
    <property type="evidence" value="ECO:0007669"/>
    <property type="project" value="UniProtKB-KW"/>
</dbReference>
<dbReference type="GO" id="GO:0061603">
    <property type="term" value="F:molybdenum cofactor guanylyltransferase activity"/>
    <property type="evidence" value="ECO:0007669"/>
    <property type="project" value="UniProtKB-EC"/>
</dbReference>
<dbReference type="GO" id="GO:1902758">
    <property type="term" value="P:bis(molybdopterin guanine dinucleotide)molybdenum biosynthetic process"/>
    <property type="evidence" value="ECO:0007669"/>
    <property type="project" value="TreeGrafter"/>
</dbReference>
<dbReference type="CDD" id="cd02503">
    <property type="entry name" value="MobA"/>
    <property type="match status" value="1"/>
</dbReference>
<dbReference type="Gene3D" id="3.90.550.10">
    <property type="entry name" value="Spore Coat Polysaccharide Biosynthesis Protein SpsA, Chain A"/>
    <property type="match status" value="1"/>
</dbReference>
<dbReference type="HAMAP" id="MF_00316">
    <property type="entry name" value="MobA"/>
    <property type="match status" value="1"/>
</dbReference>
<dbReference type="InterPro" id="IPR025877">
    <property type="entry name" value="MobA-like_NTP_Trfase"/>
</dbReference>
<dbReference type="InterPro" id="IPR013482">
    <property type="entry name" value="Molybde_CF_guanTrfase"/>
</dbReference>
<dbReference type="InterPro" id="IPR029044">
    <property type="entry name" value="Nucleotide-diphossugar_trans"/>
</dbReference>
<dbReference type="NCBIfam" id="TIGR02665">
    <property type="entry name" value="molyb_mobA"/>
    <property type="match status" value="1"/>
</dbReference>
<dbReference type="PANTHER" id="PTHR19136">
    <property type="entry name" value="MOLYBDENUM COFACTOR GUANYLYLTRANSFERASE"/>
    <property type="match status" value="1"/>
</dbReference>
<dbReference type="PANTHER" id="PTHR19136:SF81">
    <property type="entry name" value="MOLYBDENUM COFACTOR GUANYLYLTRANSFERASE"/>
    <property type="match status" value="1"/>
</dbReference>
<dbReference type="Pfam" id="PF12804">
    <property type="entry name" value="NTP_transf_3"/>
    <property type="match status" value="1"/>
</dbReference>
<dbReference type="SUPFAM" id="SSF53448">
    <property type="entry name" value="Nucleotide-diphospho-sugar transferases"/>
    <property type="match status" value="1"/>
</dbReference>
<protein>
    <recommendedName>
        <fullName evidence="1">Molybdenum cofactor guanylyltransferase</fullName>
        <shortName evidence="1">MoCo guanylyltransferase</shortName>
        <ecNumber evidence="1">2.7.7.77</ecNumber>
    </recommendedName>
    <alternativeName>
        <fullName evidence="1">GTP:molybdopterin guanylyltransferase</fullName>
    </alternativeName>
    <alternativeName>
        <fullName evidence="1">Mo-MPT guanylyltransferase</fullName>
    </alternativeName>
    <alternativeName>
        <fullName evidence="1">Molybdopterin guanylyltransferase</fullName>
    </alternativeName>
    <alternativeName>
        <fullName evidence="1">Molybdopterin-guanine dinucleotide synthase</fullName>
        <shortName evidence="1">MGD synthase</shortName>
    </alternativeName>
</protein>
<reference key="1">
    <citation type="journal article" date="2006" name="Genome Biol.">
        <title>Genomic analysis reveals that Pseudomonas aeruginosa virulence is combinatorial.</title>
        <authorList>
            <person name="Lee D.G."/>
            <person name="Urbach J.M."/>
            <person name="Wu G."/>
            <person name="Liberati N.T."/>
            <person name="Feinbaum R.L."/>
            <person name="Miyata S."/>
            <person name="Diggins L.T."/>
            <person name="He J."/>
            <person name="Saucier M."/>
            <person name="Deziel E."/>
            <person name="Friedman L."/>
            <person name="Li L."/>
            <person name="Grills G."/>
            <person name="Montgomery K."/>
            <person name="Kucherlapati R."/>
            <person name="Rahme L.G."/>
            <person name="Ausubel F.M."/>
        </authorList>
    </citation>
    <scope>NUCLEOTIDE SEQUENCE [LARGE SCALE GENOMIC DNA]</scope>
    <source>
        <strain>UCBPP-PA14</strain>
    </source>
</reference>
<name>MOBA_PSEAB</name>
<gene>
    <name evidence="1" type="primary">mobA</name>
    <name type="ordered locus">PA14_24890</name>
</gene>
<evidence type="ECO:0000255" key="1">
    <source>
        <dbReference type="HAMAP-Rule" id="MF_00316"/>
    </source>
</evidence>
<comment type="function">
    <text evidence="1">Transfers a GMP moiety from GTP to Mo-molybdopterin (Mo-MPT) cofactor (Moco or molybdenum cofactor) to form Mo-molybdopterin guanine dinucleotide (Mo-MGD) cofactor.</text>
</comment>
<comment type="catalytic activity">
    <reaction evidence="1">
        <text>Mo-molybdopterin + GTP + H(+) = Mo-molybdopterin guanine dinucleotide + diphosphate</text>
        <dbReference type="Rhea" id="RHEA:34243"/>
        <dbReference type="ChEBI" id="CHEBI:15378"/>
        <dbReference type="ChEBI" id="CHEBI:33019"/>
        <dbReference type="ChEBI" id="CHEBI:37565"/>
        <dbReference type="ChEBI" id="CHEBI:71302"/>
        <dbReference type="ChEBI" id="CHEBI:71310"/>
        <dbReference type="EC" id="2.7.7.77"/>
    </reaction>
</comment>
<comment type="cofactor">
    <cofactor evidence="1">
        <name>Mg(2+)</name>
        <dbReference type="ChEBI" id="CHEBI:18420"/>
    </cofactor>
</comment>
<comment type="subunit">
    <text evidence="1">Monomer.</text>
</comment>
<comment type="subcellular location">
    <subcellularLocation>
        <location evidence="1">Cytoplasm</location>
    </subcellularLocation>
</comment>
<comment type="domain">
    <text evidence="1">The N-terminal domain determines nucleotide recognition and specific binding, while the C-terminal domain determines the specific binding to the target protein.</text>
</comment>
<comment type="similarity">
    <text evidence="1">Belongs to the MobA family.</text>
</comment>
<organism>
    <name type="scientific">Pseudomonas aeruginosa (strain UCBPP-PA14)</name>
    <dbReference type="NCBI Taxonomy" id="208963"/>
    <lineage>
        <taxon>Bacteria</taxon>
        <taxon>Pseudomonadati</taxon>
        <taxon>Pseudomonadota</taxon>
        <taxon>Gammaproteobacteria</taxon>
        <taxon>Pseudomonadales</taxon>
        <taxon>Pseudomonadaceae</taxon>
        <taxon>Pseudomonas</taxon>
    </lineage>
</organism>
<proteinExistence type="inferred from homology"/>
<feature type="chain" id="PRO_1000115807" description="Molybdenum cofactor guanylyltransferase">
    <location>
        <begin position="1"/>
        <end position="198"/>
    </location>
</feature>
<feature type="binding site" evidence="1">
    <location>
        <begin position="14"/>
        <end position="16"/>
    </location>
    <ligand>
        <name>GTP</name>
        <dbReference type="ChEBI" id="CHEBI:37565"/>
    </ligand>
</feature>
<feature type="binding site" evidence="1">
    <location>
        <position position="27"/>
    </location>
    <ligand>
        <name>GTP</name>
        <dbReference type="ChEBI" id="CHEBI:37565"/>
    </ligand>
</feature>
<feature type="binding site" evidence="1">
    <location>
        <position position="73"/>
    </location>
    <ligand>
        <name>GTP</name>
        <dbReference type="ChEBI" id="CHEBI:37565"/>
    </ligand>
</feature>
<feature type="binding site" evidence="1">
    <location>
        <position position="103"/>
    </location>
    <ligand>
        <name>GTP</name>
        <dbReference type="ChEBI" id="CHEBI:37565"/>
    </ligand>
</feature>
<feature type="binding site" evidence="1">
    <location>
        <position position="103"/>
    </location>
    <ligand>
        <name>Mg(2+)</name>
        <dbReference type="ChEBI" id="CHEBI:18420"/>
    </ligand>
</feature>
<accession>Q02PJ4</accession>
<sequence length="198" mass="21884">MPDSALPPCSILLLAGGRGQRMGGRDKGLIEWQGLPLIAHLHRLVRPLTDDLIVSCNRNQERYAAYADRLVSDDSRDFPGPLAGIRAGLAVARHPWLLVLPCDAPRIDRALLETLLQAAGRTPARPWMLRCGGQWEPLFSLIPTHLAEEIEHAWRQGDRSPRHVLLPLGAEAIELAAGDPRLANLNTPELLANHRELK</sequence>